<name>Y750_METJA</name>
<organism>
    <name type="scientific">Methanocaldococcus jannaschii (strain ATCC 43067 / DSM 2661 / JAL-1 / JCM 10045 / NBRC 100440)</name>
    <name type="common">Methanococcus jannaschii</name>
    <dbReference type="NCBI Taxonomy" id="243232"/>
    <lineage>
        <taxon>Archaea</taxon>
        <taxon>Methanobacteriati</taxon>
        <taxon>Methanobacteriota</taxon>
        <taxon>Methanomada group</taxon>
        <taxon>Methanococci</taxon>
        <taxon>Methanococcales</taxon>
        <taxon>Methanocaldococcaceae</taxon>
        <taxon>Methanocaldococcus</taxon>
    </lineage>
</organism>
<keyword id="KW-0004">4Fe-4S</keyword>
<keyword id="KW-1003">Cell membrane</keyword>
<keyword id="KW-0249">Electron transport</keyword>
<keyword id="KW-0408">Iron</keyword>
<keyword id="KW-0411">Iron-sulfur</keyword>
<keyword id="KW-0472">Membrane</keyword>
<keyword id="KW-0479">Metal-binding</keyword>
<keyword id="KW-1185">Reference proteome</keyword>
<keyword id="KW-0677">Repeat</keyword>
<keyword id="KW-0812">Transmembrane</keyword>
<keyword id="KW-1133">Transmembrane helix</keyword>
<keyword id="KW-0813">Transport</keyword>
<protein>
    <recommendedName>
        <fullName>Uncharacterized protein MJ0750</fullName>
    </recommendedName>
</protein>
<sequence length="238" mass="27777">MDKIQILRKISQTLFFIYFVFLTSFCLCFFGIIEKFILKGSVGQLIAKLVVIVVLTLILGRVFCGWMCPLGFLFELMYKLRMKLFMKKKLPTVNEEVHNKLIYLRYVVLILSLVLTYYLSIYAFCQVCPIGFLTNLYGTVISLIILIFFLSLSFFVPMAFCRYFCPLGAFLSIFSIKPFFQLKTNNNCVKCKLCEFKCPMQIKITEKLDQKECIRCFECKSSCKKDALSFSYAFKKRS</sequence>
<reference key="1">
    <citation type="journal article" date="1996" name="Science">
        <title>Complete genome sequence of the methanogenic archaeon, Methanococcus jannaschii.</title>
        <authorList>
            <person name="Bult C.J."/>
            <person name="White O."/>
            <person name="Olsen G.J."/>
            <person name="Zhou L."/>
            <person name="Fleischmann R.D."/>
            <person name="Sutton G.G."/>
            <person name="Blake J.A."/>
            <person name="FitzGerald L.M."/>
            <person name="Clayton R.A."/>
            <person name="Gocayne J.D."/>
            <person name="Kerlavage A.R."/>
            <person name="Dougherty B.A."/>
            <person name="Tomb J.-F."/>
            <person name="Adams M.D."/>
            <person name="Reich C.I."/>
            <person name="Overbeek R."/>
            <person name="Kirkness E.F."/>
            <person name="Weinstock K.G."/>
            <person name="Merrick J.M."/>
            <person name="Glodek A."/>
            <person name="Scott J.L."/>
            <person name="Geoghagen N.S.M."/>
            <person name="Weidman J.F."/>
            <person name="Fuhrmann J.L."/>
            <person name="Nguyen D."/>
            <person name="Utterback T.R."/>
            <person name="Kelley J.M."/>
            <person name="Peterson J.D."/>
            <person name="Sadow P.W."/>
            <person name="Hanna M.C."/>
            <person name="Cotton M.D."/>
            <person name="Roberts K.M."/>
            <person name="Hurst M.A."/>
            <person name="Kaine B.P."/>
            <person name="Borodovsky M."/>
            <person name="Klenk H.-P."/>
            <person name="Fraser C.M."/>
            <person name="Smith H.O."/>
            <person name="Woese C.R."/>
            <person name="Venter J.C."/>
        </authorList>
    </citation>
    <scope>NUCLEOTIDE SEQUENCE [LARGE SCALE GENOMIC DNA]</scope>
    <source>
        <strain>ATCC 43067 / DSM 2661 / JAL-1 / JCM 10045 / NBRC 100440</strain>
    </source>
</reference>
<evidence type="ECO:0000250" key="1"/>
<evidence type="ECO:0000255" key="2"/>
<evidence type="ECO:0000255" key="3">
    <source>
        <dbReference type="PROSITE-ProRule" id="PRU00711"/>
    </source>
</evidence>
<evidence type="ECO:0000305" key="4"/>
<feature type="chain" id="PRO_0000159312" description="Uncharacterized protein MJ0750">
    <location>
        <begin position="1"/>
        <end position="238"/>
    </location>
</feature>
<feature type="transmembrane region" description="Helical" evidence="2">
    <location>
        <begin position="13"/>
        <end position="33"/>
    </location>
</feature>
<feature type="transmembrane region" description="Helical" evidence="2">
    <location>
        <begin position="40"/>
        <end position="60"/>
    </location>
</feature>
<feature type="transmembrane region" description="Helical" evidence="2">
    <location>
        <begin position="107"/>
        <end position="127"/>
    </location>
</feature>
<feature type="transmembrane region" description="Helical" evidence="2">
    <location>
        <begin position="140"/>
        <end position="160"/>
    </location>
</feature>
<feature type="domain" description="4Fe-4S ferredoxin-type 1" evidence="3">
    <location>
        <begin position="178"/>
        <end position="208"/>
    </location>
</feature>
<feature type="domain" description="4Fe-4S ferredoxin-type 2" evidence="3">
    <location>
        <begin position="204"/>
        <end position="233"/>
    </location>
</feature>
<feature type="binding site" evidence="1">
    <location>
        <position position="188"/>
    </location>
    <ligand>
        <name>[4Fe-4S] cluster</name>
        <dbReference type="ChEBI" id="CHEBI:49883"/>
        <label>1</label>
    </ligand>
</feature>
<feature type="binding site" evidence="1">
    <location>
        <position position="191"/>
    </location>
    <ligand>
        <name>[4Fe-4S] cluster</name>
        <dbReference type="ChEBI" id="CHEBI:49883"/>
        <label>1</label>
    </ligand>
</feature>
<feature type="binding site" evidence="1">
    <location>
        <position position="194"/>
    </location>
    <ligand>
        <name>[4Fe-4S] cluster</name>
        <dbReference type="ChEBI" id="CHEBI:49883"/>
        <label>1</label>
    </ligand>
</feature>
<feature type="binding site" evidence="1">
    <location>
        <position position="198"/>
    </location>
    <ligand>
        <name>[4Fe-4S] cluster</name>
        <dbReference type="ChEBI" id="CHEBI:49883"/>
        <label>2</label>
    </ligand>
</feature>
<feature type="binding site" evidence="1">
    <location>
        <position position="213"/>
    </location>
    <ligand>
        <name>[4Fe-4S] cluster</name>
        <dbReference type="ChEBI" id="CHEBI:49883"/>
        <label>2</label>
    </ligand>
</feature>
<feature type="binding site" evidence="1">
    <location>
        <position position="216"/>
    </location>
    <ligand>
        <name>[4Fe-4S] cluster</name>
        <dbReference type="ChEBI" id="CHEBI:49883"/>
        <label>2</label>
    </ligand>
</feature>
<feature type="binding site" evidence="1">
    <location>
        <position position="219"/>
    </location>
    <ligand>
        <name>[4Fe-4S] cluster</name>
        <dbReference type="ChEBI" id="CHEBI:49883"/>
        <label>2</label>
    </ligand>
</feature>
<feature type="binding site" evidence="1">
    <location>
        <position position="223"/>
    </location>
    <ligand>
        <name>[4Fe-4S] cluster</name>
        <dbReference type="ChEBI" id="CHEBI:49883"/>
        <label>1</label>
    </ligand>
</feature>
<accession>Q58160</accession>
<gene>
    <name type="ordered locus">MJ0750</name>
</gene>
<dbReference type="EMBL" id="L77117">
    <property type="protein sequence ID" value="AAB98746.1"/>
    <property type="molecule type" value="Genomic_DNA"/>
</dbReference>
<dbReference type="PIR" id="F64393">
    <property type="entry name" value="F64393"/>
</dbReference>
<dbReference type="RefSeq" id="WP_010870255.1">
    <property type="nucleotide sequence ID" value="NC_000909.1"/>
</dbReference>
<dbReference type="STRING" id="243232.MJ_0750"/>
<dbReference type="PaxDb" id="243232-MJ_0750"/>
<dbReference type="EnsemblBacteria" id="AAB98746">
    <property type="protein sequence ID" value="AAB98746"/>
    <property type="gene ID" value="MJ_0750"/>
</dbReference>
<dbReference type="GeneID" id="1451627"/>
<dbReference type="KEGG" id="mja:MJ_0750"/>
<dbReference type="eggNOG" id="arCOG02772">
    <property type="taxonomic scope" value="Archaea"/>
</dbReference>
<dbReference type="HOGENOM" id="CLU_033147_1_0_2"/>
<dbReference type="InParanoid" id="Q58160"/>
<dbReference type="OrthoDB" id="23478at2157"/>
<dbReference type="PhylomeDB" id="Q58160"/>
<dbReference type="Proteomes" id="UP000000805">
    <property type="component" value="Chromosome"/>
</dbReference>
<dbReference type="GO" id="GO:0005886">
    <property type="term" value="C:plasma membrane"/>
    <property type="evidence" value="ECO:0000318"/>
    <property type="project" value="GO_Central"/>
</dbReference>
<dbReference type="GO" id="GO:0051539">
    <property type="term" value="F:4 iron, 4 sulfur cluster binding"/>
    <property type="evidence" value="ECO:0007669"/>
    <property type="project" value="UniProtKB-KW"/>
</dbReference>
<dbReference type="GO" id="GO:0046872">
    <property type="term" value="F:metal ion binding"/>
    <property type="evidence" value="ECO:0007669"/>
    <property type="project" value="UniProtKB-KW"/>
</dbReference>
<dbReference type="GO" id="GO:0016491">
    <property type="term" value="F:oxidoreductase activity"/>
    <property type="evidence" value="ECO:0007669"/>
    <property type="project" value="UniProtKB-ARBA"/>
</dbReference>
<dbReference type="InterPro" id="IPR017896">
    <property type="entry name" value="4Fe4S_Fe-S-bd"/>
</dbReference>
<dbReference type="InterPro" id="IPR017900">
    <property type="entry name" value="4Fe4S_Fe_S_CS"/>
</dbReference>
<dbReference type="InterPro" id="IPR051684">
    <property type="entry name" value="Electron_Trans/Redox"/>
</dbReference>
<dbReference type="PANTHER" id="PTHR30176">
    <property type="entry name" value="FERREDOXIN-TYPE PROTEIN NAPH"/>
    <property type="match status" value="1"/>
</dbReference>
<dbReference type="PANTHER" id="PTHR30176:SF3">
    <property type="entry name" value="FERREDOXIN-TYPE PROTEIN NAPH"/>
    <property type="match status" value="1"/>
</dbReference>
<dbReference type="Pfam" id="PF12801">
    <property type="entry name" value="Fer4_5"/>
    <property type="match status" value="3"/>
</dbReference>
<dbReference type="SUPFAM" id="SSF54862">
    <property type="entry name" value="4Fe-4S ferredoxins"/>
    <property type="match status" value="1"/>
</dbReference>
<dbReference type="PROSITE" id="PS00198">
    <property type="entry name" value="4FE4S_FER_1"/>
    <property type="match status" value="1"/>
</dbReference>
<dbReference type="PROSITE" id="PS51379">
    <property type="entry name" value="4FE4S_FER_2"/>
    <property type="match status" value="2"/>
</dbReference>
<comment type="subcellular location">
    <subcellularLocation>
        <location evidence="4">Cell membrane</location>
        <topology evidence="4">Multi-pass membrane protein</topology>
    </subcellularLocation>
</comment>
<proteinExistence type="predicted"/>